<accession>O74994</accession>
<keyword id="KW-0131">Cell cycle</keyword>
<keyword id="KW-0132">Cell division</keyword>
<keyword id="KW-0963">Cytoplasm</keyword>
<keyword id="KW-1185">Reference proteome</keyword>
<proteinExistence type="predicted"/>
<gene>
    <name type="primary">rng3</name>
    <name type="ORF">SPCC613.04c</name>
</gene>
<protein>
    <recommendedName>
        <fullName>Ring assembly protein 3</fullName>
    </recommendedName>
</protein>
<sequence length="746" mass="84472">MTHELSSTPQIDLLNDILKNSVESNVFSDYQKKQIVTLILKSKISTAIVLLSPKSTAASEWNYLCNLQDLHECVLCVDTILPANLQTIAKRIFSLVLLPPLNDWCKQLRDAFLRFVSQPSICPTDFPLKLFFLSTVGIELLIVNEKIIPQKTQKYLLYELFSSPSSITANEIARLCQEANNRNYLLQSLTSATDARRAFLNNPNYRLLSAIIFQDGPSNLAFVLAKDCVLLARQPETIPVSFERMSSLLLMCLPSHPDFISPEFCHEWTELAERNGLQEEWLNILNTACNFKECRAIIHKECSEFIKDNHTSRVAILISMKLAFQYQLSQVIPTLKLLLQSKVYDSVLLEALRQSSTLGPVKQLIADDSCLLNNLSKLLLDTNISPLDASSIATIIYNMCKFKITKSEHERELNQLRNMAEASKTIDYKEDETAPTERRIQKILEYDILSKLFSAAKHYNSLNGLLAMILVHMANYKLARRKLVQIGALKFLTRQCFIQTQDSNAAFALAKILISVAPHSIFTKAFPSNRAIHPMSKLLSTNSADTEYPILLGKFEVLLALTNLASHDEESRQAIVQECWRELDELIIETNPLIQRATTELINNLSLSPYCLIKFIGDKDSDFENTRLHIVLALSDTEDTPTRLAACGILVQITSVDEGCKKILSLQNDFNYIVRMLTDQDEGIQHRGLVCICNIVYSKDQEIFNKFIKTPKAVETLRTYITKQAALKELQHEALVMIDSRLQGSK</sequence>
<feature type="chain" id="PRO_0000097380" description="Ring assembly protein 3">
    <location>
        <begin position="1"/>
        <end position="746"/>
    </location>
</feature>
<reference key="1">
    <citation type="journal article" date="2000" name="J. Cell Sci.">
        <title>Fission yeast Rng3p: an UCS-domain protein that mediates myosin II assembly during cytokinesis.</title>
        <authorList>
            <person name="Wong K.C.Y."/>
            <person name="Naqvi N.I."/>
            <person name="Iino Y."/>
            <person name="Yamamoto M."/>
            <person name="Balasubramanian M.K."/>
        </authorList>
    </citation>
    <scope>NUCLEOTIDE SEQUENCE [GENOMIC DNA]</scope>
    <scope>FUNCTION</scope>
    <scope>SUBCELLULAR LOCATION</scope>
    <source>
        <strain>972 / ATCC 24843</strain>
    </source>
</reference>
<reference key="2">
    <citation type="journal article" date="2002" name="Nature">
        <title>The genome sequence of Schizosaccharomyces pombe.</title>
        <authorList>
            <person name="Wood V."/>
            <person name="Gwilliam R."/>
            <person name="Rajandream M.A."/>
            <person name="Lyne M.H."/>
            <person name="Lyne R."/>
            <person name="Stewart A."/>
            <person name="Sgouros J.G."/>
            <person name="Peat N."/>
            <person name="Hayles J."/>
            <person name="Baker S.G."/>
            <person name="Basham D."/>
            <person name="Bowman S."/>
            <person name="Brooks K."/>
            <person name="Brown D."/>
            <person name="Brown S."/>
            <person name="Chillingworth T."/>
            <person name="Churcher C.M."/>
            <person name="Collins M."/>
            <person name="Connor R."/>
            <person name="Cronin A."/>
            <person name="Davis P."/>
            <person name="Feltwell T."/>
            <person name="Fraser A."/>
            <person name="Gentles S."/>
            <person name="Goble A."/>
            <person name="Hamlin N."/>
            <person name="Harris D.E."/>
            <person name="Hidalgo J."/>
            <person name="Hodgson G."/>
            <person name="Holroyd S."/>
            <person name="Hornsby T."/>
            <person name="Howarth S."/>
            <person name="Huckle E.J."/>
            <person name="Hunt S."/>
            <person name="Jagels K."/>
            <person name="James K.D."/>
            <person name="Jones L."/>
            <person name="Jones M."/>
            <person name="Leather S."/>
            <person name="McDonald S."/>
            <person name="McLean J."/>
            <person name="Mooney P."/>
            <person name="Moule S."/>
            <person name="Mungall K.L."/>
            <person name="Murphy L.D."/>
            <person name="Niblett D."/>
            <person name="Odell C."/>
            <person name="Oliver K."/>
            <person name="O'Neil S."/>
            <person name="Pearson D."/>
            <person name="Quail M.A."/>
            <person name="Rabbinowitsch E."/>
            <person name="Rutherford K.M."/>
            <person name="Rutter S."/>
            <person name="Saunders D."/>
            <person name="Seeger K."/>
            <person name="Sharp S."/>
            <person name="Skelton J."/>
            <person name="Simmonds M.N."/>
            <person name="Squares R."/>
            <person name="Squares S."/>
            <person name="Stevens K."/>
            <person name="Taylor K."/>
            <person name="Taylor R.G."/>
            <person name="Tivey A."/>
            <person name="Walsh S.V."/>
            <person name="Warren T."/>
            <person name="Whitehead S."/>
            <person name="Woodward J.R."/>
            <person name="Volckaert G."/>
            <person name="Aert R."/>
            <person name="Robben J."/>
            <person name="Grymonprez B."/>
            <person name="Weltjens I."/>
            <person name="Vanstreels E."/>
            <person name="Rieger M."/>
            <person name="Schaefer M."/>
            <person name="Mueller-Auer S."/>
            <person name="Gabel C."/>
            <person name="Fuchs M."/>
            <person name="Duesterhoeft A."/>
            <person name="Fritzc C."/>
            <person name="Holzer E."/>
            <person name="Moestl D."/>
            <person name="Hilbert H."/>
            <person name="Borzym K."/>
            <person name="Langer I."/>
            <person name="Beck A."/>
            <person name="Lehrach H."/>
            <person name="Reinhardt R."/>
            <person name="Pohl T.M."/>
            <person name="Eger P."/>
            <person name="Zimmermann W."/>
            <person name="Wedler H."/>
            <person name="Wambutt R."/>
            <person name="Purnelle B."/>
            <person name="Goffeau A."/>
            <person name="Cadieu E."/>
            <person name="Dreano S."/>
            <person name="Gloux S."/>
            <person name="Lelaure V."/>
            <person name="Mottier S."/>
            <person name="Galibert F."/>
            <person name="Aves S.J."/>
            <person name="Xiang Z."/>
            <person name="Hunt C."/>
            <person name="Moore K."/>
            <person name="Hurst S.M."/>
            <person name="Lucas M."/>
            <person name="Rochet M."/>
            <person name="Gaillardin C."/>
            <person name="Tallada V.A."/>
            <person name="Garzon A."/>
            <person name="Thode G."/>
            <person name="Daga R.R."/>
            <person name="Cruzado L."/>
            <person name="Jimenez J."/>
            <person name="Sanchez M."/>
            <person name="del Rey F."/>
            <person name="Benito J."/>
            <person name="Dominguez A."/>
            <person name="Revuelta J.L."/>
            <person name="Moreno S."/>
            <person name="Armstrong J."/>
            <person name="Forsburg S.L."/>
            <person name="Cerutti L."/>
            <person name="Lowe T."/>
            <person name="McCombie W.R."/>
            <person name="Paulsen I."/>
            <person name="Potashkin J."/>
            <person name="Shpakovski G.V."/>
            <person name="Ussery D."/>
            <person name="Barrell B.G."/>
            <person name="Nurse P."/>
        </authorList>
    </citation>
    <scope>NUCLEOTIDE SEQUENCE [LARGE SCALE GENOMIC DNA]</scope>
    <source>
        <strain>972 / ATCC 24843</strain>
    </source>
</reference>
<dbReference type="EMBL" id="AJ011773">
    <property type="protein sequence ID" value="CAA09767.1"/>
    <property type="molecule type" value="Genomic_DNA"/>
</dbReference>
<dbReference type="EMBL" id="CU329672">
    <property type="protein sequence ID" value="CAA21056.1"/>
    <property type="molecule type" value="Genomic_DNA"/>
</dbReference>
<dbReference type="PIR" id="T43648">
    <property type="entry name" value="T43648"/>
</dbReference>
<dbReference type="RefSeq" id="NP_587692.1">
    <property type="nucleotide sequence ID" value="NM_001022687.2"/>
</dbReference>
<dbReference type="SMR" id="O74994"/>
<dbReference type="BioGRID" id="275926">
    <property type="interactions" value="21"/>
</dbReference>
<dbReference type="FunCoup" id="O74994">
    <property type="interactions" value="420"/>
</dbReference>
<dbReference type="STRING" id="284812.O74994"/>
<dbReference type="SwissPalm" id="O74994"/>
<dbReference type="PaxDb" id="4896-SPCC613.04c.1"/>
<dbReference type="EnsemblFungi" id="SPCC613.04c.1">
    <property type="protein sequence ID" value="SPCC613.04c.1:pep"/>
    <property type="gene ID" value="SPCC613.04c"/>
</dbReference>
<dbReference type="GeneID" id="2539360"/>
<dbReference type="KEGG" id="spo:2539360"/>
<dbReference type="PomBase" id="SPCC613.04c">
    <property type="gene designation" value="rng3"/>
</dbReference>
<dbReference type="VEuPathDB" id="FungiDB:SPCC613.04c"/>
<dbReference type="eggNOG" id="KOG4151">
    <property type="taxonomic scope" value="Eukaryota"/>
</dbReference>
<dbReference type="HOGENOM" id="CLU_381374_0_0_1"/>
<dbReference type="InParanoid" id="O74994"/>
<dbReference type="OMA" id="IHKECSE"/>
<dbReference type="PhylomeDB" id="O74994"/>
<dbReference type="PRO" id="PR:O74994"/>
<dbReference type="Proteomes" id="UP000002485">
    <property type="component" value="Chromosome III"/>
</dbReference>
<dbReference type="GO" id="GO:0005737">
    <property type="term" value="C:cytoplasm"/>
    <property type="evidence" value="ECO:0000318"/>
    <property type="project" value="GO_Central"/>
</dbReference>
<dbReference type="GO" id="GO:0110085">
    <property type="term" value="C:mitotic actomyosin contractile ring"/>
    <property type="evidence" value="ECO:0000314"/>
    <property type="project" value="PomBase"/>
</dbReference>
<dbReference type="GO" id="GO:0051879">
    <property type="term" value="F:Hsp90 protein binding"/>
    <property type="evidence" value="ECO:0000318"/>
    <property type="project" value="GO_Central"/>
</dbReference>
<dbReference type="GO" id="GO:0017022">
    <property type="term" value="F:myosin binding"/>
    <property type="evidence" value="ECO:0000266"/>
    <property type="project" value="PomBase"/>
</dbReference>
<dbReference type="GO" id="GO:0044183">
    <property type="term" value="F:protein folding chaperone"/>
    <property type="evidence" value="ECO:0000269"/>
    <property type="project" value="PomBase"/>
</dbReference>
<dbReference type="GO" id="GO:0043022">
    <property type="term" value="F:ribosome binding"/>
    <property type="evidence" value="ECO:0000269"/>
    <property type="project" value="PomBase"/>
</dbReference>
<dbReference type="GO" id="GO:0051083">
    <property type="term" value="P:'de novo' cotranslational protein folding"/>
    <property type="evidence" value="ECO:0000269"/>
    <property type="project" value="PomBase"/>
</dbReference>
<dbReference type="GO" id="GO:0033275">
    <property type="term" value="P:actin-myosin filament sliding"/>
    <property type="evidence" value="ECO:0000314"/>
    <property type="project" value="PomBase"/>
</dbReference>
<dbReference type="GO" id="GO:0051301">
    <property type="term" value="P:cell division"/>
    <property type="evidence" value="ECO:0007669"/>
    <property type="project" value="UniProtKB-KW"/>
</dbReference>
<dbReference type="GO" id="GO:0061077">
    <property type="term" value="P:chaperone-mediated protein folding"/>
    <property type="evidence" value="ECO:0000318"/>
    <property type="project" value="GO_Central"/>
</dbReference>
<dbReference type="Gene3D" id="1.25.10.10">
    <property type="entry name" value="Leucine-rich Repeat Variant"/>
    <property type="match status" value="1"/>
</dbReference>
<dbReference type="InterPro" id="IPR011989">
    <property type="entry name" value="ARM-like"/>
</dbReference>
<dbReference type="InterPro" id="IPR016024">
    <property type="entry name" value="ARM-type_fold"/>
</dbReference>
<dbReference type="PANTHER" id="PTHR45994">
    <property type="entry name" value="FI21225P1"/>
    <property type="match status" value="1"/>
</dbReference>
<dbReference type="PANTHER" id="PTHR45994:SF1">
    <property type="entry name" value="FI21225P1"/>
    <property type="match status" value="1"/>
</dbReference>
<dbReference type="SUPFAM" id="SSF48371">
    <property type="entry name" value="ARM repeat"/>
    <property type="match status" value="1"/>
</dbReference>
<evidence type="ECO:0000269" key="1">
    <source>
    </source>
</evidence>
<name>RNG3_SCHPO</name>
<organism>
    <name type="scientific">Schizosaccharomyces pombe (strain 972 / ATCC 24843)</name>
    <name type="common">Fission yeast</name>
    <dbReference type="NCBI Taxonomy" id="284812"/>
    <lineage>
        <taxon>Eukaryota</taxon>
        <taxon>Fungi</taxon>
        <taxon>Dikarya</taxon>
        <taxon>Ascomycota</taxon>
        <taxon>Taphrinomycotina</taxon>
        <taxon>Schizosaccharomycetes</taxon>
        <taxon>Schizosaccharomycetales</taxon>
        <taxon>Schizosaccharomycetaceae</taxon>
        <taxon>Schizosaccharomyces</taxon>
    </lineage>
</organism>
<comment type="function">
    <text evidence="1">Essential for actinomyosin ring assembly during cytokinesis. Has a role, in conjunction with F-actin, in assembling myosin II-containing proteins, such as myo2, at the division site.</text>
</comment>
<comment type="subcellular location">
    <subcellularLocation>
        <location evidence="1">Cytoplasm</location>
    </subcellularLocation>
    <text>Associated with the actinomyosin ring.</text>
</comment>